<dbReference type="EC" id="6.3.2.4" evidence="2"/>
<dbReference type="EMBL" id="CP000023">
    <property type="protein sequence ID" value="AAV61186.1"/>
    <property type="molecule type" value="Genomic_DNA"/>
</dbReference>
<dbReference type="RefSeq" id="WP_011226418.1">
    <property type="nucleotide sequence ID" value="NC_006448.1"/>
</dbReference>
<dbReference type="SMR" id="Q5M355"/>
<dbReference type="STRING" id="264199.stu1583"/>
<dbReference type="GeneID" id="66899329"/>
<dbReference type="KEGG" id="stl:stu1583"/>
<dbReference type="eggNOG" id="COG1181">
    <property type="taxonomic scope" value="Bacteria"/>
</dbReference>
<dbReference type="HOGENOM" id="CLU_039268_0_0_9"/>
<dbReference type="UniPathway" id="UPA00219"/>
<dbReference type="Proteomes" id="UP000001170">
    <property type="component" value="Chromosome"/>
</dbReference>
<dbReference type="GO" id="GO:0005829">
    <property type="term" value="C:cytosol"/>
    <property type="evidence" value="ECO:0007669"/>
    <property type="project" value="TreeGrafter"/>
</dbReference>
<dbReference type="GO" id="GO:0005524">
    <property type="term" value="F:ATP binding"/>
    <property type="evidence" value="ECO:0007669"/>
    <property type="project" value="UniProtKB-KW"/>
</dbReference>
<dbReference type="GO" id="GO:0008716">
    <property type="term" value="F:D-alanine-D-alanine ligase activity"/>
    <property type="evidence" value="ECO:0007669"/>
    <property type="project" value="UniProtKB-UniRule"/>
</dbReference>
<dbReference type="GO" id="GO:0046872">
    <property type="term" value="F:metal ion binding"/>
    <property type="evidence" value="ECO:0007669"/>
    <property type="project" value="UniProtKB-KW"/>
</dbReference>
<dbReference type="GO" id="GO:0071555">
    <property type="term" value="P:cell wall organization"/>
    <property type="evidence" value="ECO:0007669"/>
    <property type="project" value="UniProtKB-KW"/>
</dbReference>
<dbReference type="GO" id="GO:0009252">
    <property type="term" value="P:peptidoglycan biosynthetic process"/>
    <property type="evidence" value="ECO:0007669"/>
    <property type="project" value="UniProtKB-UniRule"/>
</dbReference>
<dbReference type="GO" id="GO:0008360">
    <property type="term" value="P:regulation of cell shape"/>
    <property type="evidence" value="ECO:0007669"/>
    <property type="project" value="UniProtKB-KW"/>
</dbReference>
<dbReference type="FunFam" id="3.30.1490.20:FF:000007">
    <property type="entry name" value="D-alanine--D-alanine ligase"/>
    <property type="match status" value="1"/>
</dbReference>
<dbReference type="FunFam" id="3.30.470.20:FF:000008">
    <property type="entry name" value="D-alanine--D-alanine ligase"/>
    <property type="match status" value="1"/>
</dbReference>
<dbReference type="Gene3D" id="3.40.50.20">
    <property type="match status" value="1"/>
</dbReference>
<dbReference type="Gene3D" id="3.30.1490.20">
    <property type="entry name" value="ATP-grasp fold, A domain"/>
    <property type="match status" value="1"/>
</dbReference>
<dbReference type="Gene3D" id="3.30.470.20">
    <property type="entry name" value="ATP-grasp fold, B domain"/>
    <property type="match status" value="1"/>
</dbReference>
<dbReference type="HAMAP" id="MF_00047">
    <property type="entry name" value="Dala_Dala_lig"/>
    <property type="match status" value="1"/>
</dbReference>
<dbReference type="InterPro" id="IPR011761">
    <property type="entry name" value="ATP-grasp"/>
</dbReference>
<dbReference type="InterPro" id="IPR013815">
    <property type="entry name" value="ATP_grasp_subdomain_1"/>
</dbReference>
<dbReference type="InterPro" id="IPR000291">
    <property type="entry name" value="D-Ala_lig_Van_CS"/>
</dbReference>
<dbReference type="InterPro" id="IPR005905">
    <property type="entry name" value="D_ala_D_ala"/>
</dbReference>
<dbReference type="InterPro" id="IPR011095">
    <property type="entry name" value="Dala_Dala_lig_C"/>
</dbReference>
<dbReference type="InterPro" id="IPR011127">
    <property type="entry name" value="Dala_Dala_lig_N"/>
</dbReference>
<dbReference type="InterPro" id="IPR016185">
    <property type="entry name" value="PreATP-grasp_dom_sf"/>
</dbReference>
<dbReference type="NCBIfam" id="TIGR01205">
    <property type="entry name" value="D_ala_D_alaTIGR"/>
    <property type="match status" value="1"/>
</dbReference>
<dbReference type="NCBIfam" id="NF002528">
    <property type="entry name" value="PRK01966.1-4"/>
    <property type="match status" value="1"/>
</dbReference>
<dbReference type="NCBIfam" id="NF002529">
    <property type="entry name" value="PRK01966.1-5"/>
    <property type="match status" value="1"/>
</dbReference>
<dbReference type="PANTHER" id="PTHR23132">
    <property type="entry name" value="D-ALANINE--D-ALANINE LIGASE"/>
    <property type="match status" value="1"/>
</dbReference>
<dbReference type="PANTHER" id="PTHR23132:SF25">
    <property type="entry name" value="D-ALANINE--D-ALANINE LIGASE A"/>
    <property type="match status" value="1"/>
</dbReference>
<dbReference type="Pfam" id="PF07478">
    <property type="entry name" value="Dala_Dala_lig_C"/>
    <property type="match status" value="1"/>
</dbReference>
<dbReference type="Pfam" id="PF01820">
    <property type="entry name" value="Dala_Dala_lig_N"/>
    <property type="match status" value="1"/>
</dbReference>
<dbReference type="PIRSF" id="PIRSF039102">
    <property type="entry name" value="Ddl/VanB"/>
    <property type="match status" value="1"/>
</dbReference>
<dbReference type="SUPFAM" id="SSF56059">
    <property type="entry name" value="Glutathione synthetase ATP-binding domain-like"/>
    <property type="match status" value="1"/>
</dbReference>
<dbReference type="SUPFAM" id="SSF52440">
    <property type="entry name" value="PreATP-grasp domain"/>
    <property type="match status" value="1"/>
</dbReference>
<dbReference type="PROSITE" id="PS50975">
    <property type="entry name" value="ATP_GRASP"/>
    <property type="match status" value="1"/>
</dbReference>
<dbReference type="PROSITE" id="PS00843">
    <property type="entry name" value="DALA_DALA_LIGASE_1"/>
    <property type="match status" value="1"/>
</dbReference>
<dbReference type="PROSITE" id="PS00844">
    <property type="entry name" value="DALA_DALA_LIGASE_2"/>
    <property type="match status" value="1"/>
</dbReference>
<keyword id="KW-0067">ATP-binding</keyword>
<keyword id="KW-0133">Cell shape</keyword>
<keyword id="KW-0961">Cell wall biogenesis/degradation</keyword>
<keyword id="KW-0963">Cytoplasm</keyword>
<keyword id="KW-0436">Ligase</keyword>
<keyword id="KW-0460">Magnesium</keyword>
<keyword id="KW-0464">Manganese</keyword>
<keyword id="KW-0479">Metal-binding</keyword>
<keyword id="KW-0547">Nucleotide-binding</keyword>
<keyword id="KW-0573">Peptidoglycan synthesis</keyword>
<keyword id="KW-1185">Reference proteome</keyword>
<accession>Q5M355</accession>
<comment type="function">
    <text evidence="2">Cell wall formation.</text>
</comment>
<comment type="catalytic activity">
    <reaction evidence="2">
        <text>2 D-alanine + ATP = D-alanyl-D-alanine + ADP + phosphate + H(+)</text>
        <dbReference type="Rhea" id="RHEA:11224"/>
        <dbReference type="ChEBI" id="CHEBI:15378"/>
        <dbReference type="ChEBI" id="CHEBI:30616"/>
        <dbReference type="ChEBI" id="CHEBI:43474"/>
        <dbReference type="ChEBI" id="CHEBI:57416"/>
        <dbReference type="ChEBI" id="CHEBI:57822"/>
        <dbReference type="ChEBI" id="CHEBI:456216"/>
        <dbReference type="EC" id="6.3.2.4"/>
    </reaction>
</comment>
<comment type="cofactor">
    <cofactor evidence="1">
        <name>Mg(2+)</name>
        <dbReference type="ChEBI" id="CHEBI:18420"/>
    </cofactor>
    <cofactor evidence="1">
        <name>Mn(2+)</name>
        <dbReference type="ChEBI" id="CHEBI:29035"/>
    </cofactor>
    <text evidence="1">Binds 2 magnesium or manganese ions per subunit.</text>
</comment>
<comment type="pathway">
    <text evidence="2">Cell wall biogenesis; peptidoglycan biosynthesis.</text>
</comment>
<comment type="subcellular location">
    <subcellularLocation>
        <location evidence="2">Cytoplasm</location>
    </subcellularLocation>
</comment>
<comment type="similarity">
    <text evidence="2">Belongs to the D-alanine--D-alanine ligase family.</text>
</comment>
<sequence length="348" mass="38556">MSKQTLILLYGGRSAEREVSVLSAESVMRAVDYNAFEVKTYFITQSGDFIKTQEFIETPGDDEKLMTNDTVEASQAIKPSDIYEEDAVVFPVLHGPMGEDGSIQGFLETLKLPYVGTNVLSSSVAMDKIMTKRILEVAGVPQVAYTVYIEGEDLEAAVAETLEKLTFPVFVKPANMGSSVGISKAENESELRSAIDLALKYDSRILIEQGVVAREIEVGILGNTTVKTTDPGEVVKDVAFYDYQAKYIDNKITMDIPARVPVEVMTQMRAYAAKAFRALGGCGLARCDFFLTEDGAIYLNELNTMPGFTQWSMYPLLWENMGLSYSDLIKELVVLGQEMFDKRESHLI</sequence>
<name>DDL_STRT2</name>
<reference key="1">
    <citation type="journal article" date="2004" name="Nat. Biotechnol.">
        <title>Complete sequence and comparative genome analysis of the dairy bacterium Streptococcus thermophilus.</title>
        <authorList>
            <person name="Bolotin A."/>
            <person name="Quinquis B."/>
            <person name="Renault P."/>
            <person name="Sorokin A."/>
            <person name="Ehrlich S.D."/>
            <person name="Kulakauskas S."/>
            <person name="Lapidus A."/>
            <person name="Goltsman E."/>
            <person name="Mazur M."/>
            <person name="Pusch G.D."/>
            <person name="Fonstein M."/>
            <person name="Overbeek R."/>
            <person name="Kyprides N."/>
            <person name="Purnelle B."/>
            <person name="Prozzi D."/>
            <person name="Ngui K."/>
            <person name="Masuy D."/>
            <person name="Hancy F."/>
            <person name="Burteau S."/>
            <person name="Boutry M."/>
            <person name="Delcour J."/>
            <person name="Goffeau A."/>
            <person name="Hols P."/>
        </authorList>
    </citation>
    <scope>NUCLEOTIDE SEQUENCE [LARGE SCALE GENOMIC DNA]</scope>
    <source>
        <strain>ATCC BAA-250 / LMG 18311</strain>
    </source>
</reference>
<protein>
    <recommendedName>
        <fullName evidence="2">D-alanine--D-alanine ligase</fullName>
        <ecNumber evidence="2">6.3.2.4</ecNumber>
    </recommendedName>
    <alternativeName>
        <fullName evidence="2">D-Ala-D-Ala ligase</fullName>
    </alternativeName>
    <alternativeName>
        <fullName evidence="2">D-alanylalanine synthetase</fullName>
    </alternativeName>
</protein>
<organism>
    <name type="scientific">Streptococcus thermophilus (strain ATCC BAA-250 / LMG 18311)</name>
    <dbReference type="NCBI Taxonomy" id="264199"/>
    <lineage>
        <taxon>Bacteria</taxon>
        <taxon>Bacillati</taxon>
        <taxon>Bacillota</taxon>
        <taxon>Bacilli</taxon>
        <taxon>Lactobacillales</taxon>
        <taxon>Streptococcaceae</taxon>
        <taxon>Streptococcus</taxon>
    </lineage>
</organism>
<evidence type="ECO:0000250" key="1"/>
<evidence type="ECO:0000255" key="2">
    <source>
        <dbReference type="HAMAP-Rule" id="MF_00047"/>
    </source>
</evidence>
<proteinExistence type="inferred from homology"/>
<feature type="chain" id="PRO_1000030507" description="D-alanine--D-alanine ligase">
    <location>
        <begin position="1"/>
        <end position="348"/>
    </location>
</feature>
<feature type="domain" description="ATP-grasp" evidence="2">
    <location>
        <begin position="132"/>
        <end position="334"/>
    </location>
</feature>
<feature type="binding site" evidence="2">
    <location>
        <begin position="162"/>
        <end position="217"/>
    </location>
    <ligand>
        <name>ATP</name>
        <dbReference type="ChEBI" id="CHEBI:30616"/>
    </ligand>
</feature>
<feature type="binding site" evidence="2">
    <location>
        <position position="288"/>
    </location>
    <ligand>
        <name>Mg(2+)</name>
        <dbReference type="ChEBI" id="CHEBI:18420"/>
        <label>1</label>
    </ligand>
</feature>
<feature type="binding site" evidence="2">
    <location>
        <position position="301"/>
    </location>
    <ligand>
        <name>Mg(2+)</name>
        <dbReference type="ChEBI" id="CHEBI:18420"/>
        <label>1</label>
    </ligand>
</feature>
<feature type="binding site" evidence="2">
    <location>
        <position position="301"/>
    </location>
    <ligand>
        <name>Mg(2+)</name>
        <dbReference type="ChEBI" id="CHEBI:18420"/>
        <label>2</label>
    </ligand>
</feature>
<feature type="binding site" evidence="2">
    <location>
        <position position="303"/>
    </location>
    <ligand>
        <name>Mg(2+)</name>
        <dbReference type="ChEBI" id="CHEBI:18420"/>
        <label>2</label>
    </ligand>
</feature>
<gene>
    <name evidence="2" type="primary">ddl</name>
    <name type="ordered locus">stu1583</name>
</gene>